<comment type="function">
    <text evidence="1">Produces ATP from ADP in the presence of a proton gradient across the membrane. The gamma chain is believed to be important in regulating ATPase activity and the flow of protons through the CF(0) complex.</text>
</comment>
<comment type="subunit">
    <text evidence="1">F-type ATPases have 2 components, CF(1) - the catalytic core - and CF(0) - the membrane proton channel. CF(1) has five subunits: alpha(3), beta(3), gamma(1), delta(1), epsilon(1). CF(0) has three main subunits: a, b and c.</text>
</comment>
<comment type="subcellular location">
    <subcellularLocation>
        <location evidence="1">Cell inner membrane</location>
        <topology evidence="1">Peripheral membrane protein</topology>
    </subcellularLocation>
</comment>
<comment type="similarity">
    <text evidence="1">Belongs to the ATPase gamma chain family.</text>
</comment>
<reference key="1">
    <citation type="submission" date="2007-09" db="EMBL/GenBank/DDBJ databases">
        <title>Complete genome sequence of Rickettsia akari.</title>
        <authorList>
            <person name="Madan A."/>
            <person name="Fahey J."/>
            <person name="Helton E."/>
            <person name="Ketteman M."/>
            <person name="Madan A."/>
            <person name="Rodrigues S."/>
            <person name="Sanchez A."/>
            <person name="Whiting M."/>
            <person name="Dasch G."/>
            <person name="Eremeeva M."/>
        </authorList>
    </citation>
    <scope>NUCLEOTIDE SEQUENCE [LARGE SCALE GENOMIC DNA]</scope>
    <source>
        <strain>Hartford</strain>
    </source>
</reference>
<keyword id="KW-0066">ATP synthesis</keyword>
<keyword id="KW-0997">Cell inner membrane</keyword>
<keyword id="KW-1003">Cell membrane</keyword>
<keyword id="KW-0139">CF(1)</keyword>
<keyword id="KW-0375">Hydrogen ion transport</keyword>
<keyword id="KW-0406">Ion transport</keyword>
<keyword id="KW-0472">Membrane</keyword>
<keyword id="KW-0813">Transport</keyword>
<feature type="chain" id="PRO_1000053313" description="ATP synthase gamma chain">
    <location>
        <begin position="1"/>
        <end position="288"/>
    </location>
</feature>
<organism>
    <name type="scientific">Rickettsia akari (strain Hartford)</name>
    <dbReference type="NCBI Taxonomy" id="293614"/>
    <lineage>
        <taxon>Bacteria</taxon>
        <taxon>Pseudomonadati</taxon>
        <taxon>Pseudomonadota</taxon>
        <taxon>Alphaproteobacteria</taxon>
        <taxon>Rickettsiales</taxon>
        <taxon>Rickettsiaceae</taxon>
        <taxon>Rickettsieae</taxon>
        <taxon>Rickettsia</taxon>
        <taxon>spotted fever group</taxon>
    </lineage>
</organism>
<evidence type="ECO:0000255" key="1">
    <source>
        <dbReference type="HAMAP-Rule" id="MF_00815"/>
    </source>
</evidence>
<dbReference type="EMBL" id="CP000847">
    <property type="protein sequence ID" value="ABV75470.1"/>
    <property type="molecule type" value="Genomic_DNA"/>
</dbReference>
<dbReference type="RefSeq" id="WP_012150099.1">
    <property type="nucleotide sequence ID" value="NC_009881.1"/>
</dbReference>
<dbReference type="SMR" id="A8GPZ5"/>
<dbReference type="STRING" id="293614.A1C_06195"/>
<dbReference type="KEGG" id="rak:A1C_06195"/>
<dbReference type="eggNOG" id="COG0224">
    <property type="taxonomic scope" value="Bacteria"/>
</dbReference>
<dbReference type="HOGENOM" id="CLU_050669_0_1_5"/>
<dbReference type="Proteomes" id="UP000006830">
    <property type="component" value="Chromosome"/>
</dbReference>
<dbReference type="GO" id="GO:0005886">
    <property type="term" value="C:plasma membrane"/>
    <property type="evidence" value="ECO:0007669"/>
    <property type="project" value="UniProtKB-SubCell"/>
</dbReference>
<dbReference type="GO" id="GO:0045259">
    <property type="term" value="C:proton-transporting ATP synthase complex"/>
    <property type="evidence" value="ECO:0007669"/>
    <property type="project" value="UniProtKB-KW"/>
</dbReference>
<dbReference type="GO" id="GO:0005524">
    <property type="term" value="F:ATP binding"/>
    <property type="evidence" value="ECO:0007669"/>
    <property type="project" value="UniProtKB-UniRule"/>
</dbReference>
<dbReference type="GO" id="GO:0046933">
    <property type="term" value="F:proton-transporting ATP synthase activity, rotational mechanism"/>
    <property type="evidence" value="ECO:0007669"/>
    <property type="project" value="UniProtKB-UniRule"/>
</dbReference>
<dbReference type="GO" id="GO:0042777">
    <property type="term" value="P:proton motive force-driven plasma membrane ATP synthesis"/>
    <property type="evidence" value="ECO:0007669"/>
    <property type="project" value="UniProtKB-UniRule"/>
</dbReference>
<dbReference type="CDD" id="cd12151">
    <property type="entry name" value="F1-ATPase_gamma"/>
    <property type="match status" value="1"/>
</dbReference>
<dbReference type="Gene3D" id="3.40.1380.10">
    <property type="match status" value="1"/>
</dbReference>
<dbReference type="Gene3D" id="1.10.287.80">
    <property type="entry name" value="ATP synthase, gamma subunit, helix hairpin domain"/>
    <property type="match status" value="1"/>
</dbReference>
<dbReference type="HAMAP" id="MF_00815">
    <property type="entry name" value="ATP_synth_gamma_bact"/>
    <property type="match status" value="1"/>
</dbReference>
<dbReference type="InterPro" id="IPR035968">
    <property type="entry name" value="ATP_synth_F1_ATPase_gsu"/>
</dbReference>
<dbReference type="InterPro" id="IPR000131">
    <property type="entry name" value="ATP_synth_F1_gsu"/>
</dbReference>
<dbReference type="NCBIfam" id="TIGR01146">
    <property type="entry name" value="ATPsyn_F1gamma"/>
    <property type="match status" value="1"/>
</dbReference>
<dbReference type="PANTHER" id="PTHR11693">
    <property type="entry name" value="ATP SYNTHASE GAMMA CHAIN"/>
    <property type="match status" value="1"/>
</dbReference>
<dbReference type="PANTHER" id="PTHR11693:SF22">
    <property type="entry name" value="ATP SYNTHASE SUBUNIT GAMMA, MITOCHONDRIAL"/>
    <property type="match status" value="1"/>
</dbReference>
<dbReference type="Pfam" id="PF00231">
    <property type="entry name" value="ATP-synt"/>
    <property type="match status" value="1"/>
</dbReference>
<dbReference type="PRINTS" id="PR00126">
    <property type="entry name" value="ATPASEGAMMA"/>
</dbReference>
<dbReference type="SUPFAM" id="SSF52943">
    <property type="entry name" value="ATP synthase (F1-ATPase), gamma subunit"/>
    <property type="match status" value="1"/>
</dbReference>
<accession>A8GPZ5</accession>
<proteinExistence type="inferred from homology"/>
<name>ATPG_RICAH</name>
<gene>
    <name evidence="1" type="primary">atpG</name>
    <name type="ordered locus">A1C_06195</name>
</gene>
<protein>
    <recommendedName>
        <fullName evidence="1">ATP synthase gamma chain</fullName>
    </recommendedName>
    <alternativeName>
        <fullName evidence="1">ATP synthase F1 sector gamma subunit</fullName>
    </alternativeName>
    <alternativeName>
        <fullName evidence="1">F-ATPase gamma subunit</fullName>
    </alternativeName>
</protein>
<sequence>MSHLKQLRTRIKSVKSTQKITKAMQLVSASKMAKIKSQIAKSNFYIEAISKMMSDIVSIDMYELSIEEQKFFNTIPNKATLLIVMTSQRGLCGTFNYSIIKQVKYDIKELENKGEQIKLIIIGKKGYEALKMQYASYIDSYFELPKIHAENLILQVKQKIMSLVANLEVSNCVIYFNKFKNAMTQIMTRQQVLPVEKYHDDSKIENDHYEYEGKNLISNLINLYVSSQINYALLQSRASEEGARMTAMENATNNANDLISKLVLKLNRSRQAIITTELIEIIAGSEAV</sequence>